<comment type="subcellular location">
    <subcellularLocation>
        <location evidence="1">Cell inner membrane</location>
        <topology evidence="1">Multi-pass membrane protein</topology>
    </subcellularLocation>
</comment>
<comment type="similarity">
    <text evidence="1">Belongs to the PsiE family.</text>
</comment>
<name>PSIE_ECO27</name>
<gene>
    <name evidence="1" type="primary">psiE</name>
    <name type="ordered locus">E2348C_4346</name>
</gene>
<proteinExistence type="inferred from homology"/>
<accession>B7UPJ2</accession>
<feature type="chain" id="PRO_1000149613" description="Protein PsiE">
    <location>
        <begin position="1"/>
        <end position="136"/>
    </location>
</feature>
<feature type="transmembrane region" description="Helical" evidence="1">
    <location>
        <begin position="15"/>
        <end position="35"/>
    </location>
</feature>
<feature type="transmembrane region" description="Helical" evidence="1">
    <location>
        <begin position="55"/>
        <end position="75"/>
    </location>
</feature>
<feature type="transmembrane region" description="Helical" evidence="1">
    <location>
        <begin position="82"/>
        <end position="102"/>
    </location>
</feature>
<feature type="transmembrane region" description="Helical" evidence="1">
    <location>
        <begin position="108"/>
        <end position="128"/>
    </location>
</feature>
<reference key="1">
    <citation type="journal article" date="2009" name="J. Bacteriol.">
        <title>Complete genome sequence and comparative genome analysis of enteropathogenic Escherichia coli O127:H6 strain E2348/69.</title>
        <authorList>
            <person name="Iguchi A."/>
            <person name="Thomson N.R."/>
            <person name="Ogura Y."/>
            <person name="Saunders D."/>
            <person name="Ooka T."/>
            <person name="Henderson I.R."/>
            <person name="Harris D."/>
            <person name="Asadulghani M."/>
            <person name="Kurokawa K."/>
            <person name="Dean P."/>
            <person name="Kenny B."/>
            <person name="Quail M.A."/>
            <person name="Thurston S."/>
            <person name="Dougan G."/>
            <person name="Hayashi T."/>
            <person name="Parkhill J."/>
            <person name="Frankel G."/>
        </authorList>
    </citation>
    <scope>NUCLEOTIDE SEQUENCE [LARGE SCALE GENOMIC DNA]</scope>
    <source>
        <strain>E2348/69 / EPEC</strain>
    </source>
</reference>
<evidence type="ECO:0000255" key="1">
    <source>
        <dbReference type="HAMAP-Rule" id="MF_01048"/>
    </source>
</evidence>
<dbReference type="EMBL" id="FM180568">
    <property type="protein sequence ID" value="CAS11894.1"/>
    <property type="molecule type" value="Genomic_DNA"/>
</dbReference>
<dbReference type="RefSeq" id="WP_000202902.1">
    <property type="nucleotide sequence ID" value="NC_011601.1"/>
</dbReference>
<dbReference type="SMR" id="B7UPJ2"/>
<dbReference type="GeneID" id="93777857"/>
<dbReference type="KEGG" id="ecg:E2348C_4346"/>
<dbReference type="HOGENOM" id="CLU_127561_0_1_6"/>
<dbReference type="Proteomes" id="UP000008205">
    <property type="component" value="Chromosome"/>
</dbReference>
<dbReference type="GO" id="GO:0005886">
    <property type="term" value="C:plasma membrane"/>
    <property type="evidence" value="ECO:0007669"/>
    <property type="project" value="UniProtKB-SubCell"/>
</dbReference>
<dbReference type="GO" id="GO:0016036">
    <property type="term" value="P:cellular response to phosphate starvation"/>
    <property type="evidence" value="ECO:0007669"/>
    <property type="project" value="InterPro"/>
</dbReference>
<dbReference type="HAMAP" id="MF_01048">
    <property type="entry name" value="PsiE"/>
    <property type="match status" value="1"/>
</dbReference>
<dbReference type="InterPro" id="IPR009315">
    <property type="entry name" value="P_starv_induced_PsiE"/>
</dbReference>
<dbReference type="InterPro" id="IPR020948">
    <property type="entry name" value="P_starv_induced_PsiE-like"/>
</dbReference>
<dbReference type="NCBIfam" id="NF002764">
    <property type="entry name" value="PRK02833.1-2"/>
    <property type="match status" value="1"/>
</dbReference>
<dbReference type="NCBIfam" id="NF002765">
    <property type="entry name" value="PRK02833.1-3"/>
    <property type="match status" value="1"/>
</dbReference>
<dbReference type="NCBIfam" id="NF002767">
    <property type="entry name" value="PRK02833.1-5"/>
    <property type="match status" value="1"/>
</dbReference>
<dbReference type="PANTHER" id="PTHR37819">
    <property type="entry name" value="PROTEIN PSIE"/>
    <property type="match status" value="1"/>
</dbReference>
<dbReference type="PANTHER" id="PTHR37819:SF1">
    <property type="entry name" value="PROTEIN PSIE"/>
    <property type="match status" value="1"/>
</dbReference>
<dbReference type="Pfam" id="PF06146">
    <property type="entry name" value="PsiE"/>
    <property type="match status" value="1"/>
</dbReference>
<dbReference type="PIRSF" id="PIRSF029598">
    <property type="entry name" value="PsiE"/>
    <property type="match status" value="1"/>
</dbReference>
<organism>
    <name type="scientific">Escherichia coli O127:H6 (strain E2348/69 / EPEC)</name>
    <dbReference type="NCBI Taxonomy" id="574521"/>
    <lineage>
        <taxon>Bacteria</taxon>
        <taxon>Pseudomonadati</taxon>
        <taxon>Pseudomonadota</taxon>
        <taxon>Gammaproteobacteria</taxon>
        <taxon>Enterobacterales</taxon>
        <taxon>Enterobacteriaceae</taxon>
        <taxon>Escherichia</taxon>
    </lineage>
</organism>
<sequence>MTSLSRPRVEFISTILQTVLNLGLLCLGLILVVFLGKETVHLADVLFAPEQTSKYELVEGLVVYFLYFEFIALIVKYFQSGFHFPLRYFVYIGITAIVRLIIVDHKSPLDVLIYSAAILLLVITLWLCNSKRLKRE</sequence>
<keyword id="KW-0997">Cell inner membrane</keyword>
<keyword id="KW-1003">Cell membrane</keyword>
<keyword id="KW-0472">Membrane</keyword>
<keyword id="KW-1185">Reference proteome</keyword>
<keyword id="KW-0812">Transmembrane</keyword>
<keyword id="KW-1133">Transmembrane helix</keyword>
<protein>
    <recommendedName>
        <fullName evidence="1">Protein PsiE</fullName>
    </recommendedName>
</protein>